<evidence type="ECO:0000255" key="1">
    <source>
        <dbReference type="HAMAP-Rule" id="MF_01365"/>
    </source>
</evidence>
<evidence type="ECO:0000305" key="2"/>
<reference key="1">
    <citation type="journal article" date="2002" name="Proc. Natl. Acad. Sci. U.S.A.">
        <title>Complete genome sequence of Clostridium perfringens, an anaerobic flesh-eater.</title>
        <authorList>
            <person name="Shimizu T."/>
            <person name="Ohtani K."/>
            <person name="Hirakawa H."/>
            <person name="Ohshima K."/>
            <person name="Yamashita A."/>
            <person name="Shiba T."/>
            <person name="Ogasawara N."/>
            <person name="Hattori M."/>
            <person name="Kuhara S."/>
            <person name="Hayashi H."/>
        </authorList>
    </citation>
    <scope>NUCLEOTIDE SEQUENCE [LARGE SCALE GENOMIC DNA]</scope>
    <source>
        <strain>13 / Type A</strain>
    </source>
</reference>
<dbReference type="EMBL" id="BA000016">
    <property type="protein sequence ID" value="BAB82096.1"/>
    <property type="molecule type" value="Genomic_DNA"/>
</dbReference>
<dbReference type="RefSeq" id="WP_003454268.1">
    <property type="nucleotide sequence ID" value="NC_003366.1"/>
</dbReference>
<dbReference type="SMR" id="Q8XHT8"/>
<dbReference type="STRING" id="195102.gene:10491707"/>
<dbReference type="GeneID" id="93001024"/>
<dbReference type="KEGG" id="cpe:CPE2390"/>
<dbReference type="HOGENOM" id="CLU_065464_1_2_9"/>
<dbReference type="Proteomes" id="UP000000818">
    <property type="component" value="Chromosome"/>
</dbReference>
<dbReference type="GO" id="GO:0022625">
    <property type="term" value="C:cytosolic large ribosomal subunit"/>
    <property type="evidence" value="ECO:0007669"/>
    <property type="project" value="TreeGrafter"/>
</dbReference>
<dbReference type="GO" id="GO:0019843">
    <property type="term" value="F:rRNA binding"/>
    <property type="evidence" value="ECO:0007669"/>
    <property type="project" value="UniProtKB-UniRule"/>
</dbReference>
<dbReference type="GO" id="GO:0003735">
    <property type="term" value="F:structural constituent of ribosome"/>
    <property type="evidence" value="ECO:0007669"/>
    <property type="project" value="InterPro"/>
</dbReference>
<dbReference type="GO" id="GO:0002181">
    <property type="term" value="P:cytoplasmic translation"/>
    <property type="evidence" value="ECO:0007669"/>
    <property type="project" value="TreeGrafter"/>
</dbReference>
<dbReference type="FunFam" id="3.90.930.12:FF:000001">
    <property type="entry name" value="50S ribosomal protein L6"/>
    <property type="match status" value="1"/>
</dbReference>
<dbReference type="FunFam" id="3.90.930.12:FF:000002">
    <property type="entry name" value="50S ribosomal protein L6"/>
    <property type="match status" value="1"/>
</dbReference>
<dbReference type="Gene3D" id="3.90.930.12">
    <property type="entry name" value="Ribosomal protein L6, alpha-beta domain"/>
    <property type="match status" value="2"/>
</dbReference>
<dbReference type="HAMAP" id="MF_01365_B">
    <property type="entry name" value="Ribosomal_uL6_B"/>
    <property type="match status" value="1"/>
</dbReference>
<dbReference type="InterPro" id="IPR000702">
    <property type="entry name" value="Ribosomal_uL6-like"/>
</dbReference>
<dbReference type="InterPro" id="IPR036789">
    <property type="entry name" value="Ribosomal_uL6-like_a/b-dom_sf"/>
</dbReference>
<dbReference type="InterPro" id="IPR020040">
    <property type="entry name" value="Ribosomal_uL6_a/b-dom"/>
</dbReference>
<dbReference type="InterPro" id="IPR019906">
    <property type="entry name" value="Ribosomal_uL6_bac-type"/>
</dbReference>
<dbReference type="InterPro" id="IPR002358">
    <property type="entry name" value="Ribosomal_uL6_CS"/>
</dbReference>
<dbReference type="NCBIfam" id="TIGR03654">
    <property type="entry name" value="L6_bact"/>
    <property type="match status" value="1"/>
</dbReference>
<dbReference type="PANTHER" id="PTHR11655">
    <property type="entry name" value="60S/50S RIBOSOMAL PROTEIN L6/L9"/>
    <property type="match status" value="1"/>
</dbReference>
<dbReference type="PANTHER" id="PTHR11655:SF14">
    <property type="entry name" value="LARGE RIBOSOMAL SUBUNIT PROTEIN UL6M"/>
    <property type="match status" value="1"/>
</dbReference>
<dbReference type="Pfam" id="PF00347">
    <property type="entry name" value="Ribosomal_L6"/>
    <property type="match status" value="2"/>
</dbReference>
<dbReference type="PIRSF" id="PIRSF002162">
    <property type="entry name" value="Ribosomal_L6"/>
    <property type="match status" value="1"/>
</dbReference>
<dbReference type="PRINTS" id="PR00059">
    <property type="entry name" value="RIBOSOMALL6"/>
</dbReference>
<dbReference type="SUPFAM" id="SSF56053">
    <property type="entry name" value="Ribosomal protein L6"/>
    <property type="match status" value="2"/>
</dbReference>
<dbReference type="PROSITE" id="PS00525">
    <property type="entry name" value="RIBOSOMAL_L6_1"/>
    <property type="match status" value="1"/>
</dbReference>
<name>RL6_CLOPE</name>
<keyword id="KW-1185">Reference proteome</keyword>
<keyword id="KW-0687">Ribonucleoprotein</keyword>
<keyword id="KW-0689">Ribosomal protein</keyword>
<keyword id="KW-0694">RNA-binding</keyword>
<keyword id="KW-0699">rRNA-binding</keyword>
<proteinExistence type="inferred from homology"/>
<gene>
    <name evidence="1" type="primary">rplF</name>
    <name type="ordered locus">CPE2390</name>
</gene>
<accession>Q8XHT8</accession>
<protein>
    <recommendedName>
        <fullName evidence="1">Large ribosomal subunit protein uL6</fullName>
    </recommendedName>
    <alternativeName>
        <fullName evidence="2">50S ribosomal protein L6</fullName>
    </alternativeName>
</protein>
<comment type="function">
    <text evidence="1">This protein binds to the 23S rRNA, and is important in its secondary structure. It is located near the subunit interface in the base of the L7/L12 stalk, and near the tRNA binding site of the peptidyltransferase center.</text>
</comment>
<comment type="subunit">
    <text evidence="1">Part of the 50S ribosomal subunit.</text>
</comment>
<comment type="similarity">
    <text evidence="1">Belongs to the universal ribosomal protein uL6 family.</text>
</comment>
<organism>
    <name type="scientific">Clostridium perfringens (strain 13 / Type A)</name>
    <dbReference type="NCBI Taxonomy" id="195102"/>
    <lineage>
        <taxon>Bacteria</taxon>
        <taxon>Bacillati</taxon>
        <taxon>Bacillota</taxon>
        <taxon>Clostridia</taxon>
        <taxon>Eubacteriales</taxon>
        <taxon>Clostridiaceae</taxon>
        <taxon>Clostridium</taxon>
    </lineage>
</organism>
<sequence length="179" mass="19381">MSRVGKMPIAIPAGVTVTVTPENVVTVKGPKGELVKAMHKDINIAVEDAQVVVTRPSDVKEHRALHGLTRALLNNMVVGVSQGFSKTLELNGVGYRAQLQGKKLVMNLGYSHPVEVEAVDGVDFKLDGTTKVIVEGIDKEKVGAVAANIRSWRKPEPYKGKGIKYSDEVIRRKEGKTGK</sequence>
<feature type="chain" id="PRO_0000260850" description="Large ribosomal subunit protein uL6">
    <location>
        <begin position="1"/>
        <end position="179"/>
    </location>
</feature>